<accession>Q5FZI9</accession>
<keyword id="KW-0002">3D-structure</keyword>
<keyword id="KW-0007">Acetylation</keyword>
<keyword id="KW-0560">Oxidoreductase</keyword>
<keyword id="KW-0576">Peroxisome</keyword>
<keyword id="KW-0597">Phosphoprotein</keyword>
<keyword id="KW-0659">Purine metabolism</keyword>
<keyword id="KW-1185">Reference proteome</keyword>
<sequence>MAHYHNDYKKNDEVEFVRTGYGKDMVKVLHIQRDGKYHSIKEVATSVQLTLSSKKDYVYGDNSDIIPTDTIKNTVHVLAKFKGIKSIETFAMNICEHFLSSFNHVIRAQVYVEEVPWKRFEKNGVKHVHAFIHNPTGTHFCEVEQMRSGPPVIHSGIKDLKVLKTTQSGFEGFIKDQFTTLPEVKDRCFATKVYCKWRYHQGRDVDFEATWDTVRDIVLEKFAGPYDKGEYSPSVQKTLYDIQVHSLSRVPEMEDMEISLPNIHYFNIDMSKMGLINKEEVLLPLDNPYGRITGTAKRKLASKL</sequence>
<comment type="function">
    <text>Catalyzes the oxidation of uric acid to 5-hydroxyisourate, which is further processed to form (S)-allantoin.</text>
</comment>
<comment type="catalytic activity">
    <reaction>
        <text>urate + O2 + H2O = 5-hydroxyisourate + H2O2</text>
        <dbReference type="Rhea" id="RHEA:21368"/>
        <dbReference type="ChEBI" id="CHEBI:15377"/>
        <dbReference type="ChEBI" id="CHEBI:15379"/>
        <dbReference type="ChEBI" id="CHEBI:16240"/>
        <dbReference type="ChEBI" id="CHEBI:17775"/>
        <dbReference type="ChEBI" id="CHEBI:18072"/>
        <dbReference type="EC" id="1.7.3.3"/>
    </reaction>
</comment>
<comment type="pathway">
    <text>Purine metabolism; urate degradation; (S)-allantoin from urate: step 1/3.</text>
</comment>
<comment type="subcellular location">
    <subcellularLocation>
        <location evidence="1">Peroxisome</location>
    </subcellularLocation>
</comment>
<comment type="similarity">
    <text evidence="6">Belongs to the uricase family.</text>
</comment>
<proteinExistence type="evidence at protein level"/>
<name>URIC_CANLF</name>
<gene>
    <name type="primary">UOX</name>
</gene>
<evidence type="ECO:0000250" key="1"/>
<evidence type="ECO:0000250" key="2">
    <source>
        <dbReference type="UniProtKB" id="D0VWQ1"/>
    </source>
</evidence>
<evidence type="ECO:0000250" key="3">
    <source>
        <dbReference type="UniProtKB" id="P25688"/>
    </source>
</evidence>
<evidence type="ECO:0000250" key="4">
    <source>
        <dbReference type="UniProtKB" id="Q00511"/>
    </source>
</evidence>
<evidence type="ECO:0000255" key="5"/>
<evidence type="ECO:0000305" key="6"/>
<evidence type="ECO:0007829" key="7">
    <source>
        <dbReference type="PDB" id="4MB8"/>
    </source>
</evidence>
<protein>
    <recommendedName>
        <fullName>Uricase</fullName>
        <ecNumber>1.7.3.3</ecNumber>
    </recommendedName>
    <alternativeName>
        <fullName>Urate oxidase</fullName>
    </alternativeName>
</protein>
<organism>
    <name type="scientific">Canis lupus familiaris</name>
    <name type="common">Dog</name>
    <name type="synonym">Canis familiaris</name>
    <dbReference type="NCBI Taxonomy" id="9615"/>
    <lineage>
        <taxon>Eukaryota</taxon>
        <taxon>Metazoa</taxon>
        <taxon>Chordata</taxon>
        <taxon>Craniata</taxon>
        <taxon>Vertebrata</taxon>
        <taxon>Euteleostomi</taxon>
        <taxon>Mammalia</taxon>
        <taxon>Eutheria</taxon>
        <taxon>Laurasiatheria</taxon>
        <taxon>Carnivora</taxon>
        <taxon>Caniformia</taxon>
        <taxon>Canidae</taxon>
        <taxon>Canis</taxon>
    </lineage>
</organism>
<dbReference type="EC" id="1.7.3.3"/>
<dbReference type="EMBL" id="AY871313">
    <property type="protein sequence ID" value="AAW65996.1"/>
    <property type="molecule type" value="mRNA"/>
</dbReference>
<dbReference type="RefSeq" id="NP_001011886.1">
    <property type="nucleotide sequence ID" value="NM_001011886.1"/>
</dbReference>
<dbReference type="PDB" id="4MB8">
    <property type="method" value="X-ray"/>
    <property type="resolution" value="2.40 A"/>
    <property type="chains" value="A/B/C/D=1-304"/>
</dbReference>
<dbReference type="PDBsum" id="4MB8"/>
<dbReference type="SMR" id="Q5FZI9"/>
<dbReference type="FunCoup" id="Q5FZI9">
    <property type="interactions" value="17"/>
</dbReference>
<dbReference type="STRING" id="9615.ENSCAFP00000053318"/>
<dbReference type="PaxDb" id="9612-ENSCAFP00000030131"/>
<dbReference type="GeneID" id="490189"/>
<dbReference type="KEGG" id="cfa:490189"/>
<dbReference type="CTD" id="391051"/>
<dbReference type="eggNOG" id="KOG1599">
    <property type="taxonomic scope" value="Eukaryota"/>
</dbReference>
<dbReference type="InParanoid" id="Q5FZI9"/>
<dbReference type="OrthoDB" id="3417at33554"/>
<dbReference type="BRENDA" id="1.7.3.3">
    <property type="organism ID" value="1153"/>
</dbReference>
<dbReference type="UniPathway" id="UPA00394">
    <property type="reaction ID" value="UER00650"/>
</dbReference>
<dbReference type="EvolutionaryTrace" id="Q5FZI9"/>
<dbReference type="Proteomes" id="UP000002254">
    <property type="component" value="Unplaced"/>
</dbReference>
<dbReference type="Proteomes" id="UP000694429">
    <property type="component" value="Unplaced"/>
</dbReference>
<dbReference type="Proteomes" id="UP000694542">
    <property type="component" value="Unplaced"/>
</dbReference>
<dbReference type="Proteomes" id="UP000805418">
    <property type="component" value="Unplaced"/>
</dbReference>
<dbReference type="GO" id="GO:0005777">
    <property type="term" value="C:peroxisome"/>
    <property type="evidence" value="ECO:0000318"/>
    <property type="project" value="GO_Central"/>
</dbReference>
<dbReference type="GO" id="GO:0004846">
    <property type="term" value="F:urate oxidase activity"/>
    <property type="evidence" value="ECO:0000318"/>
    <property type="project" value="GO_Central"/>
</dbReference>
<dbReference type="GO" id="GO:0006145">
    <property type="term" value="P:purine nucleobase catabolic process"/>
    <property type="evidence" value="ECO:0000318"/>
    <property type="project" value="GO_Central"/>
</dbReference>
<dbReference type="GO" id="GO:0019628">
    <property type="term" value="P:urate catabolic process"/>
    <property type="evidence" value="ECO:0000318"/>
    <property type="project" value="GO_Central"/>
</dbReference>
<dbReference type="CDD" id="cd00445">
    <property type="entry name" value="Uricase"/>
    <property type="match status" value="1"/>
</dbReference>
<dbReference type="FunFam" id="3.10.270.10:FF:000001">
    <property type="entry name" value="Uricase"/>
    <property type="match status" value="1"/>
</dbReference>
<dbReference type="Gene3D" id="3.10.270.10">
    <property type="entry name" value="Urate Oxidase"/>
    <property type="match status" value="1"/>
</dbReference>
<dbReference type="InterPro" id="IPR002042">
    <property type="entry name" value="Uricase"/>
</dbReference>
<dbReference type="InterPro" id="IPR019842">
    <property type="entry name" value="Uricase_CS"/>
</dbReference>
<dbReference type="NCBIfam" id="TIGR03383">
    <property type="entry name" value="urate_oxi"/>
    <property type="match status" value="1"/>
</dbReference>
<dbReference type="PANTHER" id="PTHR42874">
    <property type="entry name" value="URICASE"/>
    <property type="match status" value="1"/>
</dbReference>
<dbReference type="PANTHER" id="PTHR42874:SF1">
    <property type="entry name" value="URICASE"/>
    <property type="match status" value="1"/>
</dbReference>
<dbReference type="Pfam" id="PF01014">
    <property type="entry name" value="Uricase"/>
    <property type="match status" value="2"/>
</dbReference>
<dbReference type="PIRSF" id="PIRSF000241">
    <property type="entry name" value="Urate_oxidase"/>
    <property type="match status" value="1"/>
</dbReference>
<dbReference type="PRINTS" id="PR00093">
    <property type="entry name" value="URICASE"/>
</dbReference>
<dbReference type="SUPFAM" id="SSF55620">
    <property type="entry name" value="Tetrahydrobiopterin biosynthesis enzymes-like"/>
    <property type="match status" value="2"/>
</dbReference>
<dbReference type="PROSITE" id="PS00366">
    <property type="entry name" value="URICASE"/>
    <property type="match status" value="1"/>
</dbReference>
<feature type="initiator methionine" description="Removed" evidence="3">
    <location>
        <position position="1"/>
    </location>
</feature>
<feature type="chain" id="PRO_0000165983" description="Uricase">
    <location>
        <begin position="2"/>
        <end position="304"/>
    </location>
</feature>
<feature type="short sequence motif" description="Microbody targeting signal" evidence="5">
    <location>
        <begin position="302"/>
        <end position="304"/>
    </location>
</feature>
<feature type="active site" description="Charge relay system" evidence="2">
    <location>
        <position position="23"/>
    </location>
</feature>
<feature type="active site" description="Charge relay system" evidence="2">
    <location>
        <position position="68"/>
    </location>
</feature>
<feature type="active site" description="Charge relay system" evidence="2">
    <location>
        <position position="264"/>
    </location>
</feature>
<feature type="binding site" evidence="4">
    <location>
        <position position="68"/>
    </location>
    <ligand>
        <name>urate</name>
        <dbReference type="ChEBI" id="CHEBI:17775"/>
    </ligand>
</feature>
<feature type="binding site" evidence="4">
    <location>
        <position position="69"/>
    </location>
    <ligand>
        <name>urate</name>
        <dbReference type="ChEBI" id="CHEBI:17775"/>
    </ligand>
</feature>
<feature type="binding site" evidence="4">
    <location>
        <position position="170"/>
    </location>
    <ligand>
        <name>urate</name>
        <dbReference type="ChEBI" id="CHEBI:17775"/>
    </ligand>
</feature>
<feature type="binding site" evidence="4">
    <location>
        <position position="187"/>
    </location>
    <ligand>
        <name>urate</name>
        <dbReference type="ChEBI" id="CHEBI:17775"/>
    </ligand>
</feature>
<feature type="binding site" evidence="4">
    <location>
        <position position="235"/>
    </location>
    <ligand>
        <name>urate</name>
        <dbReference type="ChEBI" id="CHEBI:17775"/>
    </ligand>
</feature>
<feature type="binding site" evidence="4">
    <location>
        <position position="236"/>
    </location>
    <ligand>
        <name>urate</name>
        <dbReference type="ChEBI" id="CHEBI:17775"/>
    </ligand>
</feature>
<feature type="binding site" evidence="4">
    <location>
        <position position="262"/>
    </location>
    <ligand>
        <name>urate</name>
        <dbReference type="ChEBI" id="CHEBI:17775"/>
    </ligand>
</feature>
<feature type="modified residue" description="N-acetylalanine" evidence="3">
    <location>
        <position position="2"/>
    </location>
</feature>
<feature type="modified residue" description="N6-acetyllysine; alternate" evidence="3">
    <location>
        <position position="10"/>
    </location>
</feature>
<feature type="modified residue" description="N6-succinyllysine; alternate" evidence="3">
    <location>
        <position position="10"/>
    </location>
</feature>
<feature type="modified residue" description="N6-acetyllysine; alternate" evidence="3">
    <location>
        <position position="23"/>
    </location>
</feature>
<feature type="modified residue" description="N6-succinyllysine; alternate" evidence="3">
    <location>
        <position position="23"/>
    </location>
</feature>
<feature type="modified residue" description="N6-acetyllysine" evidence="3">
    <location>
        <position position="27"/>
    </location>
</feature>
<feature type="modified residue" description="N6-acetyllysine" evidence="3">
    <location>
        <position position="36"/>
    </location>
</feature>
<feature type="modified residue" description="Phosphoserine" evidence="3">
    <location>
        <position position="39"/>
    </location>
</feature>
<feature type="modified residue" description="Phosphoserine" evidence="3">
    <location>
        <position position="63"/>
    </location>
</feature>
<feature type="modified residue" description="N6-acetyllysine" evidence="3">
    <location>
        <position position="118"/>
    </location>
</feature>
<feature type="modified residue" description="N6-acetyllysine" evidence="3">
    <location>
        <position position="122"/>
    </location>
</feature>
<feature type="modified residue" description="N6-acetyllysine" evidence="3">
    <location>
        <position position="164"/>
    </location>
</feature>
<feature type="modified residue" description="N6-acetyllysine" evidence="3">
    <location>
        <position position="175"/>
    </location>
</feature>
<feature type="modified residue" description="N6-acetyllysine" evidence="3">
    <location>
        <position position="185"/>
    </location>
</feature>
<feature type="modified residue" description="N6-acetyllysine; alternate" evidence="3">
    <location>
        <position position="221"/>
    </location>
</feature>
<feature type="modified residue" description="N6-succinyllysine; alternate" evidence="3">
    <location>
        <position position="221"/>
    </location>
</feature>
<feature type="modified residue" description="N6-acetyllysine; alternate" evidence="3">
    <location>
        <position position="228"/>
    </location>
</feature>
<feature type="modified residue" description="N6-succinyllysine; alternate" evidence="3">
    <location>
        <position position="228"/>
    </location>
</feature>
<feature type="modified residue" description="Phosphoserine" evidence="3">
    <location>
        <position position="232"/>
    </location>
</feature>
<feature type="modified residue" description="N6-acetyllysine" evidence="3">
    <location>
        <position position="278"/>
    </location>
</feature>
<feature type="modified residue" description="Phosphotyrosine" evidence="3">
    <location>
        <position position="289"/>
    </location>
</feature>
<feature type="strand" evidence="7">
    <location>
        <begin position="16"/>
        <end position="34"/>
    </location>
</feature>
<feature type="strand" evidence="7">
    <location>
        <begin position="37"/>
        <end position="52"/>
    </location>
</feature>
<feature type="helix" evidence="7">
    <location>
        <begin position="55"/>
        <end position="58"/>
    </location>
</feature>
<feature type="helix" evidence="7">
    <location>
        <begin position="68"/>
        <end position="81"/>
    </location>
</feature>
<feature type="helix" evidence="7">
    <location>
        <begin position="87"/>
        <end position="101"/>
    </location>
</feature>
<feature type="strand" evidence="7">
    <location>
        <begin position="105"/>
        <end position="114"/>
    </location>
</feature>
<feature type="strand" evidence="7">
    <location>
        <begin position="117"/>
        <end position="122"/>
    </location>
</feature>
<feature type="strand" evidence="7">
    <location>
        <begin position="125"/>
        <end position="133"/>
    </location>
</feature>
<feature type="strand" evidence="7">
    <location>
        <begin position="136"/>
        <end position="146"/>
    </location>
</feature>
<feature type="strand" evidence="7">
    <location>
        <begin position="151"/>
        <end position="168"/>
    </location>
</feature>
<feature type="strand" evidence="7">
    <location>
        <begin position="189"/>
        <end position="199"/>
    </location>
</feature>
<feature type="helix" evidence="7">
    <location>
        <begin position="208"/>
        <end position="223"/>
    </location>
</feature>
<feature type="turn" evidence="7">
    <location>
        <begin position="226"/>
        <end position="228"/>
    </location>
</feature>
<feature type="helix" evidence="7">
    <location>
        <begin position="235"/>
        <end position="249"/>
    </location>
</feature>
<feature type="strand" evidence="7">
    <location>
        <begin position="253"/>
        <end position="262"/>
    </location>
</feature>
<feature type="strand" evidence="7">
    <location>
        <begin position="265"/>
        <end position="267"/>
    </location>
</feature>
<feature type="helix" evidence="7">
    <location>
        <begin position="271"/>
        <end position="273"/>
    </location>
</feature>
<feature type="strand" evidence="7">
    <location>
        <begin position="278"/>
        <end position="284"/>
    </location>
</feature>
<feature type="strand" evidence="7">
    <location>
        <begin position="289"/>
        <end position="297"/>
    </location>
</feature>
<reference key="1">
    <citation type="journal article" date="2005" name="J. Hered.">
        <title>Exclusion of urate oxidase as a candidate gene for hyperuricosuria in the Dalmatian dog using an interbreed backcross.</title>
        <authorList>
            <person name="Safra N."/>
            <person name="Ling G.V."/>
            <person name="Schaible R.H."/>
            <person name="Bannasch D.L."/>
        </authorList>
    </citation>
    <scope>NUCLEOTIDE SEQUENCE [MRNA]</scope>
    <source>
        <tissue>Liver</tissue>
    </source>
</reference>